<accession>P25228</accession>
<accession>Q9V5N9</accession>
<comment type="function">
    <text evidence="1">Involved in exocytosis by regulating a late step in synaptic vesicle fusion. Could play a role in neurotransmitter release by regulating membrane flow in the nerve terminal (By similarity).</text>
</comment>
<comment type="subunit">
    <text evidence="3">Interacts with Rph.</text>
</comment>
<comment type="subcellular location">
    <subcellularLocation>
        <location>Cytoplasmic vesicle</location>
        <location>Secretory vesicle</location>
        <location>Synaptic vesicle</location>
    </subcellularLocation>
</comment>
<comment type="similarity">
    <text evidence="5">Belongs to the small GTPase superfamily. Rab family.</text>
</comment>
<dbReference type="EMBL" id="M64621">
    <property type="protein sequence ID" value="AAA28843.1"/>
    <property type="molecule type" value="mRNA"/>
</dbReference>
<dbReference type="EMBL" id="AB112932">
    <property type="protein sequence ID" value="BAD07037.1"/>
    <property type="molecule type" value="mRNA"/>
</dbReference>
<dbReference type="EMBL" id="AE013599">
    <property type="protein sequence ID" value="AAF58762.1"/>
    <property type="molecule type" value="Genomic_DNA"/>
</dbReference>
<dbReference type="EMBL" id="AY060449">
    <property type="protein sequence ID" value="AAL25488.1"/>
    <property type="molecule type" value="mRNA"/>
</dbReference>
<dbReference type="PIR" id="JH0425">
    <property type="entry name" value="JH0425"/>
</dbReference>
<dbReference type="RefSeq" id="NP_001356961.1">
    <property type="nucleotide sequence ID" value="NM_001370044.1"/>
</dbReference>
<dbReference type="RefSeq" id="NP_523687.1">
    <property type="nucleotide sequence ID" value="NM_078963.3"/>
</dbReference>
<dbReference type="PDB" id="4RKF">
    <property type="method" value="X-ray"/>
    <property type="resolution" value="1.50 A"/>
    <property type="chains" value="A/B=1-188"/>
</dbReference>
<dbReference type="PDBsum" id="4RKF"/>
<dbReference type="SMR" id="P25228"/>
<dbReference type="BioGRID" id="61936">
    <property type="interactions" value="10"/>
</dbReference>
<dbReference type="DIP" id="DIP-20159N"/>
<dbReference type="FunCoup" id="P25228">
    <property type="interactions" value="162"/>
</dbReference>
<dbReference type="IntAct" id="P25228">
    <property type="interactions" value="1"/>
</dbReference>
<dbReference type="STRING" id="7227.FBpp0087352"/>
<dbReference type="PaxDb" id="7227-FBpp0087352"/>
<dbReference type="DNASU" id="36127"/>
<dbReference type="EnsemblMetazoa" id="FBtr0088257">
    <property type="protein sequence ID" value="FBpp0087352"/>
    <property type="gene ID" value="FBgn0005586"/>
</dbReference>
<dbReference type="EnsemblMetazoa" id="FBtr0473383">
    <property type="protein sequence ID" value="FBpp0422979"/>
    <property type="gene ID" value="FBgn0005586"/>
</dbReference>
<dbReference type="GeneID" id="36127"/>
<dbReference type="KEGG" id="dme:Dmel_CG7576"/>
<dbReference type="AGR" id="FB:FBgn0005586"/>
<dbReference type="CTD" id="36127"/>
<dbReference type="FlyBase" id="FBgn0005586">
    <property type="gene designation" value="Rab3"/>
</dbReference>
<dbReference type="VEuPathDB" id="VectorBase:FBgn0005586"/>
<dbReference type="eggNOG" id="KOG0093">
    <property type="taxonomic scope" value="Eukaryota"/>
</dbReference>
<dbReference type="GeneTree" id="ENSGT00940000169270"/>
<dbReference type="HOGENOM" id="CLU_041217_10_1_1"/>
<dbReference type="InParanoid" id="P25228"/>
<dbReference type="OMA" id="PSSQCNC"/>
<dbReference type="OrthoDB" id="9989112at2759"/>
<dbReference type="PhylomeDB" id="P25228"/>
<dbReference type="Reactome" id="R-DME-181429">
    <property type="pathway name" value="Serotonin Neurotransmitter Release Cycle"/>
</dbReference>
<dbReference type="Reactome" id="R-DME-181430">
    <property type="pathway name" value="Norepinephrine Neurotransmitter Release Cycle"/>
</dbReference>
<dbReference type="Reactome" id="R-DME-210500">
    <property type="pathway name" value="Glutamate Neurotransmitter Release Cycle"/>
</dbReference>
<dbReference type="Reactome" id="R-DME-212676">
    <property type="pathway name" value="Dopamine Neurotransmitter Release Cycle"/>
</dbReference>
<dbReference type="Reactome" id="R-DME-264642">
    <property type="pathway name" value="Acetylcholine Neurotransmitter Release Cycle"/>
</dbReference>
<dbReference type="Reactome" id="R-DME-6798695">
    <property type="pathway name" value="Neutrophil degranulation"/>
</dbReference>
<dbReference type="Reactome" id="R-DME-8873719">
    <property type="pathway name" value="RAB geranylgeranylation"/>
</dbReference>
<dbReference type="Reactome" id="R-DME-8876198">
    <property type="pathway name" value="RAB GEFs exchange GTP for GDP on RABs"/>
</dbReference>
<dbReference type="Reactome" id="R-DME-888590">
    <property type="pathway name" value="GABA synthesis, release, reuptake and degradation"/>
</dbReference>
<dbReference type="BioGRID-ORCS" id="36127">
    <property type="hits" value="0 hits in 3 CRISPR screens"/>
</dbReference>
<dbReference type="ChiTaRS" id="Rab3">
    <property type="organism name" value="fly"/>
</dbReference>
<dbReference type="EvolutionaryTrace" id="P25228"/>
<dbReference type="GenomeRNAi" id="36127"/>
<dbReference type="PRO" id="PR:P25228"/>
<dbReference type="Proteomes" id="UP000000803">
    <property type="component" value="Chromosome 2R"/>
</dbReference>
<dbReference type="Bgee" id="FBgn0005586">
    <property type="expression patterns" value="Expressed in adult Hugin neuron (Drosophila) in brain and 175 other cell types or tissues"/>
</dbReference>
<dbReference type="ExpressionAtlas" id="P25228">
    <property type="expression patterns" value="baseline and differential"/>
</dbReference>
<dbReference type="GO" id="GO:0005768">
    <property type="term" value="C:endosome"/>
    <property type="evidence" value="ECO:0000318"/>
    <property type="project" value="GO_Central"/>
</dbReference>
<dbReference type="GO" id="GO:0005886">
    <property type="term" value="C:plasma membrane"/>
    <property type="evidence" value="ECO:0000318"/>
    <property type="project" value="GO_Central"/>
</dbReference>
<dbReference type="GO" id="GO:0048786">
    <property type="term" value="C:presynaptic active zone"/>
    <property type="evidence" value="ECO:0000314"/>
    <property type="project" value="FlyBase"/>
</dbReference>
<dbReference type="GO" id="GO:0045202">
    <property type="term" value="C:synapse"/>
    <property type="evidence" value="ECO:0000315"/>
    <property type="project" value="UniProtKB"/>
</dbReference>
<dbReference type="GO" id="GO:0008021">
    <property type="term" value="C:synaptic vesicle"/>
    <property type="evidence" value="ECO:0007005"/>
    <property type="project" value="FlyBase"/>
</dbReference>
<dbReference type="GO" id="GO:0031982">
    <property type="term" value="C:vesicle"/>
    <property type="evidence" value="ECO:0000250"/>
    <property type="project" value="FlyBase"/>
</dbReference>
<dbReference type="GO" id="GO:0005525">
    <property type="term" value="F:GTP binding"/>
    <property type="evidence" value="ECO:0000314"/>
    <property type="project" value="UniProtKB"/>
</dbReference>
<dbReference type="GO" id="GO:0003924">
    <property type="term" value="F:GTPase activity"/>
    <property type="evidence" value="ECO:0000250"/>
    <property type="project" value="FlyBase"/>
</dbReference>
<dbReference type="GO" id="GO:0000287">
    <property type="term" value="F:magnesium ion binding"/>
    <property type="evidence" value="ECO:0000314"/>
    <property type="project" value="UniProtKB"/>
</dbReference>
<dbReference type="GO" id="GO:0031489">
    <property type="term" value="F:myosin V binding"/>
    <property type="evidence" value="ECO:0000318"/>
    <property type="project" value="GO_Central"/>
</dbReference>
<dbReference type="GO" id="GO:0048789">
    <property type="term" value="P:cytoskeletal matrix organization at active zone"/>
    <property type="evidence" value="ECO:0000315"/>
    <property type="project" value="FlyBase"/>
</dbReference>
<dbReference type="GO" id="GO:0006887">
    <property type="term" value="P:exocytosis"/>
    <property type="evidence" value="ECO:0000318"/>
    <property type="project" value="GO_Central"/>
</dbReference>
<dbReference type="GO" id="GO:0048790">
    <property type="term" value="P:maintenance of presynaptic active zone structure"/>
    <property type="evidence" value="ECO:0000315"/>
    <property type="project" value="FlyBase"/>
</dbReference>
<dbReference type="GO" id="GO:0007269">
    <property type="term" value="P:neurotransmitter secretion"/>
    <property type="evidence" value="ECO:0000303"/>
    <property type="project" value="FlyBase"/>
</dbReference>
<dbReference type="GO" id="GO:0015031">
    <property type="term" value="P:protein transport"/>
    <property type="evidence" value="ECO:0007669"/>
    <property type="project" value="UniProtKB-KW"/>
</dbReference>
<dbReference type="GO" id="GO:0032482">
    <property type="term" value="P:Rab protein signal transduction"/>
    <property type="evidence" value="ECO:0000250"/>
    <property type="project" value="FlyBase"/>
</dbReference>
<dbReference type="GO" id="GO:0046928">
    <property type="term" value="P:regulation of neurotransmitter secretion"/>
    <property type="evidence" value="ECO:0000315"/>
    <property type="project" value="UniProtKB"/>
</dbReference>
<dbReference type="GO" id="GO:0048172">
    <property type="term" value="P:regulation of short-term neuronal synaptic plasticity"/>
    <property type="evidence" value="ECO:0000250"/>
    <property type="project" value="ParkinsonsUK-UCL"/>
</dbReference>
<dbReference type="GO" id="GO:0031630">
    <property type="term" value="P:regulation of synaptic vesicle fusion to presynaptic active zone membrane"/>
    <property type="evidence" value="ECO:0000250"/>
    <property type="project" value="ParkinsonsUK-UCL"/>
</dbReference>
<dbReference type="GO" id="GO:0046718">
    <property type="term" value="P:symbiont entry into host cell"/>
    <property type="evidence" value="ECO:0007001"/>
    <property type="project" value="FlyBase"/>
</dbReference>
<dbReference type="GO" id="GO:0016192">
    <property type="term" value="P:vesicle-mediated transport"/>
    <property type="evidence" value="ECO:0000353"/>
    <property type="project" value="FlyBase"/>
</dbReference>
<dbReference type="CDD" id="cd01865">
    <property type="entry name" value="Rab3"/>
    <property type="match status" value="1"/>
</dbReference>
<dbReference type="FunFam" id="3.40.50.300:FF:000206">
    <property type="entry name" value="Ras-related protein Rab-3C"/>
    <property type="match status" value="1"/>
</dbReference>
<dbReference type="Gene3D" id="3.40.50.300">
    <property type="entry name" value="P-loop containing nucleotide triphosphate hydrolases"/>
    <property type="match status" value="1"/>
</dbReference>
<dbReference type="InterPro" id="IPR027417">
    <property type="entry name" value="P-loop_NTPase"/>
</dbReference>
<dbReference type="InterPro" id="IPR037872">
    <property type="entry name" value="Rab3"/>
</dbReference>
<dbReference type="InterPro" id="IPR005225">
    <property type="entry name" value="Small_GTP-bd"/>
</dbReference>
<dbReference type="InterPro" id="IPR001806">
    <property type="entry name" value="Small_GTPase"/>
</dbReference>
<dbReference type="InterPro" id="IPR050305">
    <property type="entry name" value="Small_GTPase_Rab"/>
</dbReference>
<dbReference type="NCBIfam" id="TIGR00231">
    <property type="entry name" value="small_GTP"/>
    <property type="match status" value="1"/>
</dbReference>
<dbReference type="PANTHER" id="PTHR47980">
    <property type="entry name" value="LD44762P"/>
    <property type="match status" value="1"/>
</dbReference>
<dbReference type="Pfam" id="PF00071">
    <property type="entry name" value="Ras"/>
    <property type="match status" value="1"/>
</dbReference>
<dbReference type="PRINTS" id="PR00449">
    <property type="entry name" value="RASTRNSFRMNG"/>
</dbReference>
<dbReference type="SMART" id="SM00175">
    <property type="entry name" value="RAB"/>
    <property type="match status" value="1"/>
</dbReference>
<dbReference type="SMART" id="SM00176">
    <property type="entry name" value="RAN"/>
    <property type="match status" value="1"/>
</dbReference>
<dbReference type="SMART" id="SM00173">
    <property type="entry name" value="RAS"/>
    <property type="match status" value="1"/>
</dbReference>
<dbReference type="SMART" id="SM00174">
    <property type="entry name" value="RHO"/>
    <property type="match status" value="1"/>
</dbReference>
<dbReference type="SUPFAM" id="SSF52540">
    <property type="entry name" value="P-loop containing nucleoside triphosphate hydrolases"/>
    <property type="match status" value="1"/>
</dbReference>
<dbReference type="PROSITE" id="PS51419">
    <property type="entry name" value="RAB"/>
    <property type="match status" value="1"/>
</dbReference>
<evidence type="ECO:0000250" key="1"/>
<evidence type="ECO:0000256" key="2">
    <source>
        <dbReference type="SAM" id="MobiDB-lite"/>
    </source>
</evidence>
<evidence type="ECO:0000269" key="3">
    <source>
    </source>
</evidence>
<evidence type="ECO:0000269" key="4">
    <source>
    </source>
</evidence>
<evidence type="ECO:0000305" key="5"/>
<evidence type="ECO:0000305" key="6">
    <source>
    </source>
</evidence>
<evidence type="ECO:0000305" key="7">
    <source>
    </source>
</evidence>
<evidence type="ECO:0007744" key="8">
    <source>
        <dbReference type="PDB" id="4RKF"/>
    </source>
</evidence>
<evidence type="ECO:0007829" key="9">
    <source>
        <dbReference type="PDB" id="4RKF"/>
    </source>
</evidence>
<protein>
    <recommendedName>
        <fullName>Ras-related protein Rab-3</fullName>
    </recommendedName>
</protein>
<keyword id="KW-0002">3D-structure</keyword>
<keyword id="KW-0968">Cytoplasmic vesicle</keyword>
<keyword id="KW-0268">Exocytosis</keyword>
<keyword id="KW-0342">GTP-binding</keyword>
<keyword id="KW-0449">Lipoprotein</keyword>
<keyword id="KW-0460">Magnesium</keyword>
<keyword id="KW-0479">Metal-binding</keyword>
<keyword id="KW-0488">Methylation</keyword>
<keyword id="KW-0547">Nucleotide-binding</keyword>
<keyword id="KW-0636">Prenylation</keyword>
<keyword id="KW-0653">Protein transport</keyword>
<keyword id="KW-1185">Reference proteome</keyword>
<keyword id="KW-0770">Synapse</keyword>
<keyword id="KW-0813">Transport</keyword>
<proteinExistence type="evidence at protein level"/>
<sequence>MASGGDPKWQKDAADQNFDYMFKLLIIGNSSVGKTSFLFRYADDSFTSAFVSTVGIDFKVKTVFRHDKRVKLQIWDTAGQERYRTITTAYYRGAMGFILMYDVTNEDSFNSVQDWVTQIKTYSWDNAQVILVGNKCDMEDQRVISFERGRQLADQLGVEFFETSAKENVNVKAVFERLVDIICDKMSESLDADPTLVGGGQKGQRLTDQPQGTPNANCNC</sequence>
<name>RAB3_DROME</name>
<organism>
    <name type="scientific">Drosophila melanogaster</name>
    <name type="common">Fruit fly</name>
    <dbReference type="NCBI Taxonomy" id="7227"/>
    <lineage>
        <taxon>Eukaryota</taxon>
        <taxon>Metazoa</taxon>
        <taxon>Ecdysozoa</taxon>
        <taxon>Arthropoda</taxon>
        <taxon>Hexapoda</taxon>
        <taxon>Insecta</taxon>
        <taxon>Pterygota</taxon>
        <taxon>Neoptera</taxon>
        <taxon>Endopterygota</taxon>
        <taxon>Diptera</taxon>
        <taxon>Brachycera</taxon>
        <taxon>Muscomorpha</taxon>
        <taxon>Ephydroidea</taxon>
        <taxon>Drosophilidae</taxon>
        <taxon>Drosophila</taxon>
        <taxon>Sophophora</taxon>
    </lineage>
</organism>
<gene>
    <name type="primary">Rab3</name>
    <name type="ORF">CG7576</name>
</gene>
<feature type="chain" id="PRO_0000121092" description="Ras-related protein Rab-3">
    <location>
        <begin position="1"/>
        <end position="220"/>
    </location>
</feature>
<feature type="region of interest" description="Disordered" evidence="2">
    <location>
        <begin position="194"/>
        <end position="220"/>
    </location>
</feature>
<feature type="short sequence motif" description="Effector region" evidence="1">
    <location>
        <begin position="50"/>
        <end position="58"/>
    </location>
</feature>
<feature type="compositionally biased region" description="Polar residues" evidence="2">
    <location>
        <begin position="204"/>
        <end position="220"/>
    </location>
</feature>
<feature type="binding site" evidence="7 8">
    <location>
        <position position="30"/>
    </location>
    <ligand>
        <name>GTP</name>
        <dbReference type="ChEBI" id="CHEBI:37565"/>
    </ligand>
</feature>
<feature type="binding site" evidence="7 8">
    <location>
        <position position="33"/>
    </location>
    <ligand>
        <name>GTP</name>
        <dbReference type="ChEBI" id="CHEBI:37565"/>
    </ligand>
</feature>
<feature type="binding site" evidence="7 8">
    <location>
        <position position="34"/>
    </location>
    <ligand>
        <name>GTP</name>
        <dbReference type="ChEBI" id="CHEBI:37565"/>
    </ligand>
</feature>
<feature type="binding site" evidence="7 8">
    <location>
        <position position="35"/>
    </location>
    <ligand>
        <name>GTP</name>
        <dbReference type="ChEBI" id="CHEBI:37565"/>
    </ligand>
</feature>
<feature type="binding site" evidence="4 8">
    <location>
        <position position="35"/>
    </location>
    <ligand>
        <name>Mg(2+)</name>
        <dbReference type="ChEBI" id="CHEBI:18420"/>
    </ligand>
</feature>
<feature type="binding site" evidence="7 8">
    <location>
        <position position="36"/>
    </location>
    <ligand>
        <name>GTP</name>
        <dbReference type="ChEBI" id="CHEBI:37565"/>
    </ligand>
</feature>
<feature type="binding site" evidence="7 8">
    <location>
        <position position="47"/>
    </location>
    <ligand>
        <name>GTP</name>
        <dbReference type="ChEBI" id="CHEBI:37565"/>
    </ligand>
</feature>
<feature type="binding site" evidence="7 8">
    <location>
        <position position="48"/>
    </location>
    <ligand>
        <name>GTP</name>
        <dbReference type="ChEBI" id="CHEBI:37565"/>
    </ligand>
</feature>
<feature type="binding site" evidence="7 8">
    <location>
        <position position="52"/>
    </location>
    <ligand>
        <name>GTP</name>
        <dbReference type="ChEBI" id="CHEBI:37565"/>
    </ligand>
</feature>
<feature type="binding site" evidence="7 8">
    <location>
        <position position="53"/>
    </location>
    <ligand>
        <name>GTP</name>
        <dbReference type="ChEBI" id="CHEBI:37565"/>
    </ligand>
</feature>
<feature type="binding site" evidence="4 8">
    <location>
        <position position="53"/>
    </location>
    <ligand>
        <name>Mg(2+)</name>
        <dbReference type="ChEBI" id="CHEBI:18420"/>
    </ligand>
</feature>
<feature type="binding site" evidence="7 8">
    <location>
        <position position="79"/>
    </location>
    <ligand>
        <name>GTP</name>
        <dbReference type="ChEBI" id="CHEBI:37565"/>
    </ligand>
</feature>
<feature type="binding site" evidence="7 8">
    <location>
        <position position="134"/>
    </location>
    <ligand>
        <name>GTP</name>
        <dbReference type="ChEBI" id="CHEBI:37565"/>
    </ligand>
</feature>
<feature type="binding site" evidence="7 8">
    <location>
        <position position="137"/>
    </location>
    <ligand>
        <name>GTP</name>
        <dbReference type="ChEBI" id="CHEBI:37565"/>
    </ligand>
</feature>
<feature type="binding site" evidence="7 8">
    <location>
        <position position="165"/>
    </location>
    <ligand>
        <name>GTP</name>
        <dbReference type="ChEBI" id="CHEBI:37565"/>
    </ligand>
</feature>
<feature type="binding site" evidence="7 8">
    <location>
        <position position="166"/>
    </location>
    <ligand>
        <name>GTP</name>
        <dbReference type="ChEBI" id="CHEBI:37565"/>
    </ligand>
</feature>
<feature type="modified residue" description="Cysteine methyl ester" evidence="1">
    <location>
        <position position="220"/>
    </location>
</feature>
<feature type="lipid moiety-binding region" description="S-geranylgeranyl cysteine" evidence="6">
    <location>
        <position position="218"/>
    </location>
</feature>
<feature type="lipid moiety-binding region" description="S-geranylgeranyl cysteine" evidence="6">
    <location>
        <position position="220"/>
    </location>
</feature>
<feature type="mutagenesis site" description="Protein is locked into the activated GTP-bound state." evidence="4">
    <original>Q</original>
    <variation>L</variation>
    <location>
        <position position="80"/>
    </location>
</feature>
<feature type="strand" evidence="9">
    <location>
        <begin position="19"/>
        <end position="29"/>
    </location>
</feature>
<feature type="helix" evidence="9">
    <location>
        <begin position="34"/>
        <end position="43"/>
    </location>
</feature>
<feature type="strand" evidence="9">
    <location>
        <begin position="55"/>
        <end position="65"/>
    </location>
</feature>
<feature type="strand" evidence="9">
    <location>
        <begin position="68"/>
        <end position="77"/>
    </location>
</feature>
<feature type="helix" evidence="9">
    <location>
        <begin position="81"/>
        <end position="83"/>
    </location>
</feature>
<feature type="helix" evidence="9">
    <location>
        <begin position="84"/>
        <end position="89"/>
    </location>
</feature>
<feature type="turn" evidence="9">
    <location>
        <begin position="90"/>
        <end position="93"/>
    </location>
</feature>
<feature type="strand" evidence="9">
    <location>
        <begin position="95"/>
        <end position="102"/>
    </location>
</feature>
<feature type="helix" evidence="9">
    <location>
        <begin position="106"/>
        <end position="110"/>
    </location>
</feature>
<feature type="helix" evidence="9">
    <location>
        <begin position="112"/>
        <end position="122"/>
    </location>
</feature>
<feature type="strand" evidence="9">
    <location>
        <begin position="128"/>
        <end position="134"/>
    </location>
</feature>
<feature type="helix" evidence="9">
    <location>
        <begin position="139"/>
        <end position="141"/>
    </location>
</feature>
<feature type="helix" evidence="9">
    <location>
        <begin position="146"/>
        <end position="156"/>
    </location>
</feature>
<feature type="strand" evidence="9">
    <location>
        <begin position="159"/>
        <end position="162"/>
    </location>
</feature>
<feature type="turn" evidence="9">
    <location>
        <begin position="165"/>
        <end position="168"/>
    </location>
</feature>
<feature type="helix" evidence="9">
    <location>
        <begin position="171"/>
        <end position="185"/>
    </location>
</feature>
<reference key="1">
    <citation type="journal article" date="1991" name="Neuron">
        <title>Rab3A attachment to the synaptic vesicle membrane mediated by a conserved polyisoprenylated carboxy-terminal sequence.</title>
        <authorList>
            <person name="Johnston P.A."/>
            <person name="Archer B.T. III"/>
            <person name="Robinson K."/>
            <person name="Mignery G.A."/>
            <person name="Jahn R."/>
            <person name="Suedhof T.C."/>
        </authorList>
    </citation>
    <scope>NUCLEOTIDE SEQUENCE [MRNA]</scope>
    <source>
        <tissue>Brain</tissue>
    </source>
</reference>
<reference key="2">
    <citation type="journal article" date="2004" name="J. Biol. Chem.">
        <title>Rabphilin and Noc2 are recruited to dense-core vesicles through specific interaction with Rab27A in PC12 cells.</title>
        <authorList>
            <person name="Fukuda M."/>
            <person name="Kanno E."/>
            <person name="Yamamoto A."/>
        </authorList>
    </citation>
    <scope>NUCLEOTIDE SEQUENCE [MRNA]</scope>
    <scope>ISOPRENYLATION AT CYS-218 AND CYS-220</scope>
    <scope>INTERACTION WITH RPH</scope>
</reference>
<reference key="3">
    <citation type="journal article" date="2000" name="Science">
        <title>The genome sequence of Drosophila melanogaster.</title>
        <authorList>
            <person name="Adams M.D."/>
            <person name="Celniker S.E."/>
            <person name="Holt R.A."/>
            <person name="Evans C.A."/>
            <person name="Gocayne J.D."/>
            <person name="Amanatides P.G."/>
            <person name="Scherer S.E."/>
            <person name="Li P.W."/>
            <person name="Hoskins R.A."/>
            <person name="Galle R.F."/>
            <person name="George R.A."/>
            <person name="Lewis S.E."/>
            <person name="Richards S."/>
            <person name="Ashburner M."/>
            <person name="Henderson S.N."/>
            <person name="Sutton G.G."/>
            <person name="Wortman J.R."/>
            <person name="Yandell M.D."/>
            <person name="Zhang Q."/>
            <person name="Chen L.X."/>
            <person name="Brandon R.C."/>
            <person name="Rogers Y.-H.C."/>
            <person name="Blazej R.G."/>
            <person name="Champe M."/>
            <person name="Pfeiffer B.D."/>
            <person name="Wan K.H."/>
            <person name="Doyle C."/>
            <person name="Baxter E.G."/>
            <person name="Helt G."/>
            <person name="Nelson C.R."/>
            <person name="Miklos G.L.G."/>
            <person name="Abril J.F."/>
            <person name="Agbayani A."/>
            <person name="An H.-J."/>
            <person name="Andrews-Pfannkoch C."/>
            <person name="Baldwin D."/>
            <person name="Ballew R.M."/>
            <person name="Basu A."/>
            <person name="Baxendale J."/>
            <person name="Bayraktaroglu L."/>
            <person name="Beasley E.M."/>
            <person name="Beeson K.Y."/>
            <person name="Benos P.V."/>
            <person name="Berman B.P."/>
            <person name="Bhandari D."/>
            <person name="Bolshakov S."/>
            <person name="Borkova D."/>
            <person name="Botchan M.R."/>
            <person name="Bouck J."/>
            <person name="Brokstein P."/>
            <person name="Brottier P."/>
            <person name="Burtis K.C."/>
            <person name="Busam D.A."/>
            <person name="Butler H."/>
            <person name="Cadieu E."/>
            <person name="Center A."/>
            <person name="Chandra I."/>
            <person name="Cherry J.M."/>
            <person name="Cawley S."/>
            <person name="Dahlke C."/>
            <person name="Davenport L.B."/>
            <person name="Davies P."/>
            <person name="de Pablos B."/>
            <person name="Delcher A."/>
            <person name="Deng Z."/>
            <person name="Mays A.D."/>
            <person name="Dew I."/>
            <person name="Dietz S.M."/>
            <person name="Dodson K."/>
            <person name="Doup L.E."/>
            <person name="Downes M."/>
            <person name="Dugan-Rocha S."/>
            <person name="Dunkov B.C."/>
            <person name="Dunn P."/>
            <person name="Durbin K.J."/>
            <person name="Evangelista C.C."/>
            <person name="Ferraz C."/>
            <person name="Ferriera S."/>
            <person name="Fleischmann W."/>
            <person name="Fosler C."/>
            <person name="Gabrielian A.E."/>
            <person name="Garg N.S."/>
            <person name="Gelbart W.M."/>
            <person name="Glasser K."/>
            <person name="Glodek A."/>
            <person name="Gong F."/>
            <person name="Gorrell J.H."/>
            <person name="Gu Z."/>
            <person name="Guan P."/>
            <person name="Harris M."/>
            <person name="Harris N.L."/>
            <person name="Harvey D.A."/>
            <person name="Heiman T.J."/>
            <person name="Hernandez J.R."/>
            <person name="Houck J."/>
            <person name="Hostin D."/>
            <person name="Houston K.A."/>
            <person name="Howland T.J."/>
            <person name="Wei M.-H."/>
            <person name="Ibegwam C."/>
            <person name="Jalali M."/>
            <person name="Kalush F."/>
            <person name="Karpen G.H."/>
            <person name="Ke Z."/>
            <person name="Kennison J.A."/>
            <person name="Ketchum K.A."/>
            <person name="Kimmel B.E."/>
            <person name="Kodira C.D."/>
            <person name="Kraft C.L."/>
            <person name="Kravitz S."/>
            <person name="Kulp D."/>
            <person name="Lai Z."/>
            <person name="Lasko P."/>
            <person name="Lei Y."/>
            <person name="Levitsky A.A."/>
            <person name="Li J.H."/>
            <person name="Li Z."/>
            <person name="Liang Y."/>
            <person name="Lin X."/>
            <person name="Liu X."/>
            <person name="Mattei B."/>
            <person name="McIntosh T.C."/>
            <person name="McLeod M.P."/>
            <person name="McPherson D."/>
            <person name="Merkulov G."/>
            <person name="Milshina N.V."/>
            <person name="Mobarry C."/>
            <person name="Morris J."/>
            <person name="Moshrefi A."/>
            <person name="Mount S.M."/>
            <person name="Moy M."/>
            <person name="Murphy B."/>
            <person name="Murphy L."/>
            <person name="Muzny D.M."/>
            <person name="Nelson D.L."/>
            <person name="Nelson D.R."/>
            <person name="Nelson K.A."/>
            <person name="Nixon K."/>
            <person name="Nusskern D.R."/>
            <person name="Pacleb J.M."/>
            <person name="Palazzolo M."/>
            <person name="Pittman G.S."/>
            <person name="Pan S."/>
            <person name="Pollard J."/>
            <person name="Puri V."/>
            <person name="Reese M.G."/>
            <person name="Reinert K."/>
            <person name="Remington K."/>
            <person name="Saunders R.D.C."/>
            <person name="Scheeler F."/>
            <person name="Shen H."/>
            <person name="Shue B.C."/>
            <person name="Siden-Kiamos I."/>
            <person name="Simpson M."/>
            <person name="Skupski M.P."/>
            <person name="Smith T.J."/>
            <person name="Spier E."/>
            <person name="Spradling A.C."/>
            <person name="Stapleton M."/>
            <person name="Strong R."/>
            <person name="Sun E."/>
            <person name="Svirskas R."/>
            <person name="Tector C."/>
            <person name="Turner R."/>
            <person name="Venter E."/>
            <person name="Wang A.H."/>
            <person name="Wang X."/>
            <person name="Wang Z.-Y."/>
            <person name="Wassarman D.A."/>
            <person name="Weinstock G.M."/>
            <person name="Weissenbach J."/>
            <person name="Williams S.M."/>
            <person name="Woodage T."/>
            <person name="Worley K.C."/>
            <person name="Wu D."/>
            <person name="Yang S."/>
            <person name="Yao Q.A."/>
            <person name="Ye J."/>
            <person name="Yeh R.-F."/>
            <person name="Zaveri J.S."/>
            <person name="Zhan M."/>
            <person name="Zhang G."/>
            <person name="Zhao Q."/>
            <person name="Zheng L."/>
            <person name="Zheng X.H."/>
            <person name="Zhong F.N."/>
            <person name="Zhong W."/>
            <person name="Zhou X."/>
            <person name="Zhu S.C."/>
            <person name="Zhu X."/>
            <person name="Smith H.O."/>
            <person name="Gibbs R.A."/>
            <person name="Myers E.W."/>
            <person name="Rubin G.M."/>
            <person name="Venter J.C."/>
        </authorList>
    </citation>
    <scope>NUCLEOTIDE SEQUENCE [LARGE SCALE GENOMIC DNA]</scope>
    <source>
        <strain>Berkeley</strain>
    </source>
</reference>
<reference key="4">
    <citation type="journal article" date="2002" name="Genome Biol.">
        <title>Annotation of the Drosophila melanogaster euchromatic genome: a systematic review.</title>
        <authorList>
            <person name="Misra S."/>
            <person name="Crosby M.A."/>
            <person name="Mungall C.J."/>
            <person name="Matthews B.B."/>
            <person name="Campbell K.S."/>
            <person name="Hradecky P."/>
            <person name="Huang Y."/>
            <person name="Kaminker J.S."/>
            <person name="Millburn G.H."/>
            <person name="Prochnik S.E."/>
            <person name="Smith C.D."/>
            <person name="Tupy J.L."/>
            <person name="Whitfield E.J."/>
            <person name="Bayraktaroglu L."/>
            <person name="Berman B.P."/>
            <person name="Bettencourt B.R."/>
            <person name="Celniker S.E."/>
            <person name="de Grey A.D.N.J."/>
            <person name="Drysdale R.A."/>
            <person name="Harris N.L."/>
            <person name="Richter J."/>
            <person name="Russo S."/>
            <person name="Schroeder A.J."/>
            <person name="Shu S.Q."/>
            <person name="Stapleton M."/>
            <person name="Yamada C."/>
            <person name="Ashburner M."/>
            <person name="Gelbart W.M."/>
            <person name="Rubin G.M."/>
            <person name="Lewis S.E."/>
        </authorList>
    </citation>
    <scope>GENOME REANNOTATION</scope>
    <source>
        <strain>Berkeley</strain>
    </source>
</reference>
<reference key="5">
    <citation type="journal article" date="2002" name="Genome Biol.">
        <title>A Drosophila full-length cDNA resource.</title>
        <authorList>
            <person name="Stapleton M."/>
            <person name="Carlson J.W."/>
            <person name="Brokstein P."/>
            <person name="Yu C."/>
            <person name="Champe M."/>
            <person name="George R.A."/>
            <person name="Guarin H."/>
            <person name="Kronmiller B."/>
            <person name="Pacleb J.M."/>
            <person name="Park S."/>
            <person name="Wan K.H."/>
            <person name="Rubin G.M."/>
            <person name="Celniker S.E."/>
        </authorList>
    </citation>
    <scope>NUCLEOTIDE SEQUENCE [LARGE SCALE MRNA]</scope>
    <source>
        <strain>Berkeley</strain>
        <tissue>Larva</tissue>
        <tissue>Pupae</tissue>
    </source>
</reference>
<reference evidence="8" key="6">
    <citation type="journal article" date="2015" name="Acta Crystallogr. F Struct. Biol. Commun.">
        <title>Structures of Drosophila melanogaster Rab2 and Rab3 bound to GMPPNP.</title>
        <authorList>
            <person name="Lardong J.A."/>
            <person name="Driller J.H."/>
            <person name="Depner H."/>
            <person name="Weise C."/>
            <person name="Petzoldt A."/>
            <person name="Wahl M.C."/>
            <person name="Sigrist S.J."/>
            <person name="Loll B."/>
        </authorList>
    </citation>
    <scope>X-RAY CRYSTALLOGRAPHY (1.50 ANGSTROMS) OF 1-188 OF MUTANT LYS-80 IN COMPLEX WITH MG(2+) AND GTP ANALOG</scope>
    <scope>MUTAGENESIS OF GLN-80</scope>
</reference>